<keyword id="KW-0325">Glycoprotein</keyword>
<keyword id="KW-0472">Membrane</keyword>
<keyword id="KW-1267">Proteomics identification</keyword>
<keyword id="KW-1185">Reference proteome</keyword>
<keyword id="KW-0732">Signal</keyword>
<keyword id="KW-0812">Transmembrane</keyword>
<keyword id="KW-1133">Transmembrane helix</keyword>
<accession>Q8ND94</accession>
<accession>A8K5L9</accession>
<proteinExistence type="evidence at protein level"/>
<evidence type="ECO:0000255" key="1"/>
<evidence type="ECO:0000255" key="2">
    <source>
        <dbReference type="PROSITE-ProRule" id="PRU00316"/>
    </source>
</evidence>
<evidence type="ECO:0000305" key="3"/>
<comment type="subcellular location">
    <subcellularLocation>
        <location evidence="3">Membrane</location>
        <topology evidence="3">Single-pass type I membrane protein</topology>
    </subcellularLocation>
</comment>
<protein>
    <recommendedName>
        <fullName>LRRN4 C-terminal-like protein</fullName>
    </recommendedName>
</protein>
<sequence>MLGSPCLLWLLAVTFLVPRAQPLAPQDFEEEEADETETAWPPLPAVPCDYDHCRHLQVPCKELQRVGPAACLCPGLSSPAQPPDPPRMGEVRIAAEEGRAVVHWCAPFSPVLHYWLLLWDGSEAAQKGPPLNATVRRAELKGLKPGGIYVVCVVAANEAGASRVPQAGGEGLEGADIPAFGPCSRLAVPPNPRTLVHAAVGVGTALALLSCAALVWHFCLRDRWGCPRRAAARAAGAL</sequence>
<dbReference type="EMBL" id="AY358354">
    <property type="protein sequence ID" value="AAQ88720.1"/>
    <property type="molecule type" value="mRNA"/>
</dbReference>
<dbReference type="EMBL" id="AK291334">
    <property type="protein sequence ID" value="BAF84023.1"/>
    <property type="molecule type" value="mRNA"/>
</dbReference>
<dbReference type="EMBL" id="AL834319">
    <property type="protein sequence ID" value="CAD38988.1"/>
    <property type="molecule type" value="mRNA"/>
</dbReference>
<dbReference type="EMBL" id="BC053902">
    <property type="protein sequence ID" value="AAH53902.1"/>
    <property type="molecule type" value="mRNA"/>
</dbReference>
<dbReference type="CCDS" id="CCDS8030.1"/>
<dbReference type="RefSeq" id="NP_981967.1">
    <property type="nucleotide sequence ID" value="NM_203422.4"/>
</dbReference>
<dbReference type="SMR" id="Q8ND94"/>
<dbReference type="BioGRID" id="128684">
    <property type="interactions" value="72"/>
</dbReference>
<dbReference type="FunCoup" id="Q8ND94">
    <property type="interactions" value="5"/>
</dbReference>
<dbReference type="IntAct" id="Q8ND94">
    <property type="interactions" value="61"/>
</dbReference>
<dbReference type="STRING" id="9606.ENSP00000325808"/>
<dbReference type="GlyCosmos" id="Q8ND94">
    <property type="glycosylation" value="1 site, No reported glycans"/>
</dbReference>
<dbReference type="GlyGen" id="Q8ND94">
    <property type="glycosylation" value="1 site"/>
</dbReference>
<dbReference type="PhosphoSitePlus" id="Q8ND94"/>
<dbReference type="BioMuta" id="LRRN4CL"/>
<dbReference type="DMDM" id="74760169"/>
<dbReference type="jPOST" id="Q8ND94"/>
<dbReference type="MassIVE" id="Q8ND94"/>
<dbReference type="PaxDb" id="9606-ENSP00000325808"/>
<dbReference type="PeptideAtlas" id="Q8ND94"/>
<dbReference type="ProteomicsDB" id="72993"/>
<dbReference type="Antibodypedia" id="28669">
    <property type="antibodies" value="88 antibodies from 18 providers"/>
</dbReference>
<dbReference type="DNASU" id="221091"/>
<dbReference type="Ensembl" id="ENST00000317449.5">
    <property type="protein sequence ID" value="ENSP00000325808.4"/>
    <property type="gene ID" value="ENSG00000177363.5"/>
</dbReference>
<dbReference type="GeneID" id="221091"/>
<dbReference type="KEGG" id="hsa:221091"/>
<dbReference type="MANE-Select" id="ENST00000317449.5">
    <property type="protein sequence ID" value="ENSP00000325808.4"/>
    <property type="RefSeq nucleotide sequence ID" value="NM_203422.4"/>
    <property type="RefSeq protein sequence ID" value="NP_981967.1"/>
</dbReference>
<dbReference type="UCSC" id="uc001nun.3">
    <property type="organism name" value="human"/>
</dbReference>
<dbReference type="AGR" id="HGNC:33724"/>
<dbReference type="CTD" id="221091"/>
<dbReference type="DisGeNET" id="221091"/>
<dbReference type="GeneCards" id="LRRN4CL"/>
<dbReference type="HGNC" id="HGNC:33724">
    <property type="gene designation" value="LRRN4CL"/>
</dbReference>
<dbReference type="HPA" id="ENSG00000177363">
    <property type="expression patterns" value="Low tissue specificity"/>
</dbReference>
<dbReference type="MalaCards" id="LRRN4CL"/>
<dbReference type="neXtProt" id="NX_Q8ND94"/>
<dbReference type="OpenTargets" id="ENSG00000177363"/>
<dbReference type="PharmGKB" id="PA162394685"/>
<dbReference type="VEuPathDB" id="HostDB:ENSG00000177363"/>
<dbReference type="eggNOG" id="ENOG502S59T">
    <property type="taxonomic scope" value="Eukaryota"/>
</dbReference>
<dbReference type="GeneTree" id="ENSGT00940000162696"/>
<dbReference type="HOGENOM" id="CLU_093350_0_0_1"/>
<dbReference type="InParanoid" id="Q8ND94"/>
<dbReference type="OMA" id="SCSALVW"/>
<dbReference type="OrthoDB" id="8824963at2759"/>
<dbReference type="PAN-GO" id="Q8ND94">
    <property type="GO annotations" value="0 GO annotations based on evolutionary models"/>
</dbReference>
<dbReference type="PhylomeDB" id="Q8ND94"/>
<dbReference type="PathwayCommons" id="Q8ND94"/>
<dbReference type="SignaLink" id="Q8ND94"/>
<dbReference type="BioGRID-ORCS" id="221091">
    <property type="hits" value="20 hits in 1145 CRISPR screens"/>
</dbReference>
<dbReference type="GenomeRNAi" id="221091"/>
<dbReference type="Pharos" id="Q8ND94">
    <property type="development level" value="Tdark"/>
</dbReference>
<dbReference type="PRO" id="PR:Q8ND94"/>
<dbReference type="Proteomes" id="UP000005640">
    <property type="component" value="Chromosome 11"/>
</dbReference>
<dbReference type="RNAct" id="Q8ND94">
    <property type="molecule type" value="protein"/>
</dbReference>
<dbReference type="Bgee" id="ENSG00000177363">
    <property type="expression patterns" value="Expressed in decidua and 131 other cell types or tissues"/>
</dbReference>
<dbReference type="GO" id="GO:0016020">
    <property type="term" value="C:membrane"/>
    <property type="evidence" value="ECO:0007669"/>
    <property type="project" value="UniProtKB-SubCell"/>
</dbReference>
<dbReference type="CDD" id="cd00063">
    <property type="entry name" value="FN3"/>
    <property type="match status" value="1"/>
</dbReference>
<dbReference type="Gene3D" id="2.60.40.10">
    <property type="entry name" value="Immunoglobulins"/>
    <property type="match status" value="1"/>
</dbReference>
<dbReference type="InterPro" id="IPR003961">
    <property type="entry name" value="FN3_dom"/>
</dbReference>
<dbReference type="InterPro" id="IPR036116">
    <property type="entry name" value="FN3_sf"/>
</dbReference>
<dbReference type="InterPro" id="IPR013783">
    <property type="entry name" value="Ig-like_fold"/>
</dbReference>
<dbReference type="Pfam" id="PF00041">
    <property type="entry name" value="fn3"/>
    <property type="match status" value="1"/>
</dbReference>
<dbReference type="SMART" id="SM00060">
    <property type="entry name" value="FN3"/>
    <property type="match status" value="1"/>
</dbReference>
<dbReference type="SUPFAM" id="SSF49265">
    <property type="entry name" value="Fibronectin type III"/>
    <property type="match status" value="1"/>
</dbReference>
<dbReference type="PROSITE" id="PS50853">
    <property type="entry name" value="FN3"/>
    <property type="match status" value="1"/>
</dbReference>
<reference key="1">
    <citation type="journal article" date="2003" name="Genome Res.">
        <title>The secreted protein discovery initiative (SPDI), a large-scale effort to identify novel human secreted and transmembrane proteins: a bioinformatics assessment.</title>
        <authorList>
            <person name="Clark H.F."/>
            <person name="Gurney A.L."/>
            <person name="Abaya E."/>
            <person name="Baker K."/>
            <person name="Baldwin D.T."/>
            <person name="Brush J."/>
            <person name="Chen J."/>
            <person name="Chow B."/>
            <person name="Chui C."/>
            <person name="Crowley C."/>
            <person name="Currell B."/>
            <person name="Deuel B."/>
            <person name="Dowd P."/>
            <person name="Eaton D."/>
            <person name="Foster J.S."/>
            <person name="Grimaldi C."/>
            <person name="Gu Q."/>
            <person name="Hass P.E."/>
            <person name="Heldens S."/>
            <person name="Huang A."/>
            <person name="Kim H.S."/>
            <person name="Klimowski L."/>
            <person name="Jin Y."/>
            <person name="Johnson S."/>
            <person name="Lee J."/>
            <person name="Lewis L."/>
            <person name="Liao D."/>
            <person name="Mark M.R."/>
            <person name="Robbie E."/>
            <person name="Sanchez C."/>
            <person name="Schoenfeld J."/>
            <person name="Seshagiri S."/>
            <person name="Simmons L."/>
            <person name="Singh J."/>
            <person name="Smith V."/>
            <person name="Stinson J."/>
            <person name="Vagts A."/>
            <person name="Vandlen R.L."/>
            <person name="Watanabe C."/>
            <person name="Wieand D."/>
            <person name="Woods K."/>
            <person name="Xie M.-H."/>
            <person name="Yansura D.G."/>
            <person name="Yi S."/>
            <person name="Yu G."/>
            <person name="Yuan J."/>
            <person name="Zhang M."/>
            <person name="Zhang Z."/>
            <person name="Goddard A.D."/>
            <person name="Wood W.I."/>
            <person name="Godowski P.J."/>
            <person name="Gray A.M."/>
        </authorList>
    </citation>
    <scope>NUCLEOTIDE SEQUENCE [LARGE SCALE MRNA]</scope>
</reference>
<reference key="2">
    <citation type="journal article" date="2004" name="Nat. Genet.">
        <title>Complete sequencing and characterization of 21,243 full-length human cDNAs.</title>
        <authorList>
            <person name="Ota T."/>
            <person name="Suzuki Y."/>
            <person name="Nishikawa T."/>
            <person name="Otsuki T."/>
            <person name="Sugiyama T."/>
            <person name="Irie R."/>
            <person name="Wakamatsu A."/>
            <person name="Hayashi K."/>
            <person name="Sato H."/>
            <person name="Nagai K."/>
            <person name="Kimura K."/>
            <person name="Makita H."/>
            <person name="Sekine M."/>
            <person name="Obayashi M."/>
            <person name="Nishi T."/>
            <person name="Shibahara T."/>
            <person name="Tanaka T."/>
            <person name="Ishii S."/>
            <person name="Yamamoto J."/>
            <person name="Saito K."/>
            <person name="Kawai Y."/>
            <person name="Isono Y."/>
            <person name="Nakamura Y."/>
            <person name="Nagahari K."/>
            <person name="Murakami K."/>
            <person name="Yasuda T."/>
            <person name="Iwayanagi T."/>
            <person name="Wagatsuma M."/>
            <person name="Shiratori A."/>
            <person name="Sudo H."/>
            <person name="Hosoiri T."/>
            <person name="Kaku Y."/>
            <person name="Kodaira H."/>
            <person name="Kondo H."/>
            <person name="Sugawara M."/>
            <person name="Takahashi M."/>
            <person name="Kanda K."/>
            <person name="Yokoi T."/>
            <person name="Furuya T."/>
            <person name="Kikkawa E."/>
            <person name="Omura Y."/>
            <person name="Abe K."/>
            <person name="Kamihara K."/>
            <person name="Katsuta N."/>
            <person name="Sato K."/>
            <person name="Tanikawa M."/>
            <person name="Yamazaki M."/>
            <person name="Ninomiya K."/>
            <person name="Ishibashi T."/>
            <person name="Yamashita H."/>
            <person name="Murakawa K."/>
            <person name="Fujimori K."/>
            <person name="Tanai H."/>
            <person name="Kimata M."/>
            <person name="Watanabe M."/>
            <person name="Hiraoka S."/>
            <person name="Chiba Y."/>
            <person name="Ishida S."/>
            <person name="Ono Y."/>
            <person name="Takiguchi S."/>
            <person name="Watanabe S."/>
            <person name="Yosida M."/>
            <person name="Hotuta T."/>
            <person name="Kusano J."/>
            <person name="Kanehori K."/>
            <person name="Takahashi-Fujii A."/>
            <person name="Hara H."/>
            <person name="Tanase T.-O."/>
            <person name="Nomura Y."/>
            <person name="Togiya S."/>
            <person name="Komai F."/>
            <person name="Hara R."/>
            <person name="Takeuchi K."/>
            <person name="Arita M."/>
            <person name="Imose N."/>
            <person name="Musashino K."/>
            <person name="Yuuki H."/>
            <person name="Oshima A."/>
            <person name="Sasaki N."/>
            <person name="Aotsuka S."/>
            <person name="Yoshikawa Y."/>
            <person name="Matsunawa H."/>
            <person name="Ichihara T."/>
            <person name="Shiohata N."/>
            <person name="Sano S."/>
            <person name="Moriya S."/>
            <person name="Momiyama H."/>
            <person name="Satoh N."/>
            <person name="Takami S."/>
            <person name="Terashima Y."/>
            <person name="Suzuki O."/>
            <person name="Nakagawa S."/>
            <person name="Senoh A."/>
            <person name="Mizoguchi H."/>
            <person name="Goto Y."/>
            <person name="Shimizu F."/>
            <person name="Wakebe H."/>
            <person name="Hishigaki H."/>
            <person name="Watanabe T."/>
            <person name="Sugiyama A."/>
            <person name="Takemoto M."/>
            <person name="Kawakami B."/>
            <person name="Yamazaki M."/>
            <person name="Watanabe K."/>
            <person name="Kumagai A."/>
            <person name="Itakura S."/>
            <person name="Fukuzumi Y."/>
            <person name="Fujimori Y."/>
            <person name="Komiyama M."/>
            <person name="Tashiro H."/>
            <person name="Tanigami A."/>
            <person name="Fujiwara T."/>
            <person name="Ono T."/>
            <person name="Yamada K."/>
            <person name="Fujii Y."/>
            <person name="Ozaki K."/>
            <person name="Hirao M."/>
            <person name="Ohmori Y."/>
            <person name="Kawabata A."/>
            <person name="Hikiji T."/>
            <person name="Kobatake N."/>
            <person name="Inagaki H."/>
            <person name="Ikema Y."/>
            <person name="Okamoto S."/>
            <person name="Okitani R."/>
            <person name="Kawakami T."/>
            <person name="Noguchi S."/>
            <person name="Itoh T."/>
            <person name="Shigeta K."/>
            <person name="Senba T."/>
            <person name="Matsumura K."/>
            <person name="Nakajima Y."/>
            <person name="Mizuno T."/>
            <person name="Morinaga M."/>
            <person name="Sasaki M."/>
            <person name="Togashi T."/>
            <person name="Oyama M."/>
            <person name="Hata H."/>
            <person name="Watanabe M."/>
            <person name="Komatsu T."/>
            <person name="Mizushima-Sugano J."/>
            <person name="Satoh T."/>
            <person name="Shirai Y."/>
            <person name="Takahashi Y."/>
            <person name="Nakagawa K."/>
            <person name="Okumura K."/>
            <person name="Nagase T."/>
            <person name="Nomura N."/>
            <person name="Kikuchi H."/>
            <person name="Masuho Y."/>
            <person name="Yamashita R."/>
            <person name="Nakai K."/>
            <person name="Yada T."/>
            <person name="Nakamura Y."/>
            <person name="Ohara O."/>
            <person name="Isogai T."/>
            <person name="Sugano S."/>
        </authorList>
    </citation>
    <scope>NUCLEOTIDE SEQUENCE [LARGE SCALE MRNA]</scope>
    <source>
        <tissue>Tongue</tissue>
    </source>
</reference>
<reference key="3">
    <citation type="journal article" date="2007" name="BMC Genomics">
        <title>The full-ORF clone resource of the German cDNA consortium.</title>
        <authorList>
            <person name="Bechtel S."/>
            <person name="Rosenfelder H."/>
            <person name="Duda A."/>
            <person name="Schmidt C.P."/>
            <person name="Ernst U."/>
            <person name="Wellenreuther R."/>
            <person name="Mehrle A."/>
            <person name="Schuster C."/>
            <person name="Bahr A."/>
            <person name="Bloecker H."/>
            <person name="Heubner D."/>
            <person name="Hoerlein A."/>
            <person name="Michel G."/>
            <person name="Wedler H."/>
            <person name="Koehrer K."/>
            <person name="Ottenwaelder B."/>
            <person name="Poustka A."/>
            <person name="Wiemann S."/>
            <person name="Schupp I."/>
        </authorList>
    </citation>
    <scope>NUCLEOTIDE SEQUENCE [LARGE SCALE MRNA]</scope>
    <source>
        <tissue>Uterus</tissue>
    </source>
</reference>
<reference key="4">
    <citation type="journal article" date="2004" name="Genome Res.">
        <title>The status, quality, and expansion of the NIH full-length cDNA project: the Mammalian Gene Collection (MGC).</title>
        <authorList>
            <consortium name="The MGC Project Team"/>
        </authorList>
    </citation>
    <scope>NUCLEOTIDE SEQUENCE [LARGE SCALE MRNA]</scope>
    <source>
        <tissue>Skin</tissue>
    </source>
</reference>
<feature type="signal peptide" evidence="1">
    <location>
        <begin position="1"/>
        <end position="22"/>
    </location>
</feature>
<feature type="chain" id="PRO_0000317752" description="LRRN4 C-terminal-like protein">
    <location>
        <begin position="23"/>
        <end position="238"/>
    </location>
</feature>
<feature type="topological domain" description="Extracellular" evidence="1">
    <location>
        <begin position="23"/>
        <end position="194"/>
    </location>
</feature>
<feature type="transmembrane region" description="Helical" evidence="1">
    <location>
        <begin position="195"/>
        <end position="215"/>
    </location>
</feature>
<feature type="topological domain" description="Cytoplasmic" evidence="1">
    <location>
        <begin position="216"/>
        <end position="238"/>
    </location>
</feature>
<feature type="domain" description="Fibronectin type-III" evidence="2">
    <location>
        <begin position="82"/>
        <end position="176"/>
    </location>
</feature>
<feature type="glycosylation site" description="N-linked (GlcNAc...) asparagine" evidence="1">
    <location>
        <position position="132"/>
    </location>
</feature>
<feature type="sequence conflict" description="In Ref. 2; BAF84023." evidence="3" ref="2">
    <original>D</original>
    <variation>N</variation>
    <location>
        <position position="34"/>
    </location>
</feature>
<gene>
    <name type="primary">LRRN4CL</name>
    <name type="ORF">UNQ728/PRO1410</name>
</gene>
<organism>
    <name type="scientific">Homo sapiens</name>
    <name type="common">Human</name>
    <dbReference type="NCBI Taxonomy" id="9606"/>
    <lineage>
        <taxon>Eukaryota</taxon>
        <taxon>Metazoa</taxon>
        <taxon>Chordata</taxon>
        <taxon>Craniata</taxon>
        <taxon>Vertebrata</taxon>
        <taxon>Euteleostomi</taxon>
        <taxon>Mammalia</taxon>
        <taxon>Eutheria</taxon>
        <taxon>Euarchontoglires</taxon>
        <taxon>Primates</taxon>
        <taxon>Haplorrhini</taxon>
        <taxon>Catarrhini</taxon>
        <taxon>Hominidae</taxon>
        <taxon>Homo</taxon>
    </lineage>
</organism>
<name>LRN4L_HUMAN</name>